<comment type="function">
    <text evidence="1">Involved in the gluconeogenesis. Catalyzes stereospecifically the conversion of dihydroxyacetone phosphate (DHAP) to D-glyceraldehyde-3-phosphate (G3P).</text>
</comment>
<comment type="catalytic activity">
    <reaction evidence="1">
        <text>D-glyceraldehyde 3-phosphate = dihydroxyacetone phosphate</text>
        <dbReference type="Rhea" id="RHEA:18585"/>
        <dbReference type="ChEBI" id="CHEBI:57642"/>
        <dbReference type="ChEBI" id="CHEBI:59776"/>
        <dbReference type="EC" id="5.3.1.1"/>
    </reaction>
</comment>
<comment type="pathway">
    <text evidence="1">Carbohydrate biosynthesis; gluconeogenesis.</text>
</comment>
<comment type="pathway">
    <text evidence="1">Carbohydrate degradation; glycolysis; D-glyceraldehyde 3-phosphate from glycerone phosphate: step 1/1.</text>
</comment>
<comment type="subunit">
    <text evidence="1">Homodimer.</text>
</comment>
<comment type="subcellular location">
    <subcellularLocation>
        <location evidence="1">Cytoplasm</location>
    </subcellularLocation>
</comment>
<comment type="similarity">
    <text evidence="1">Belongs to the triosephosphate isomerase family.</text>
</comment>
<name>TPIS_HAEI8</name>
<dbReference type="EC" id="5.3.1.1" evidence="1"/>
<dbReference type="EMBL" id="CP000057">
    <property type="protein sequence ID" value="AAX87709.1"/>
    <property type="molecule type" value="Genomic_DNA"/>
</dbReference>
<dbReference type="RefSeq" id="WP_005650804.1">
    <property type="nucleotide sequence ID" value="NC_007146.2"/>
</dbReference>
<dbReference type="SMR" id="Q4QMN8"/>
<dbReference type="GeneID" id="93219677"/>
<dbReference type="KEGG" id="hit:NTHI0800"/>
<dbReference type="HOGENOM" id="CLU_024251_2_1_6"/>
<dbReference type="UniPathway" id="UPA00109">
    <property type="reaction ID" value="UER00189"/>
</dbReference>
<dbReference type="UniPathway" id="UPA00138"/>
<dbReference type="Proteomes" id="UP000002525">
    <property type="component" value="Chromosome"/>
</dbReference>
<dbReference type="GO" id="GO:0005829">
    <property type="term" value="C:cytosol"/>
    <property type="evidence" value="ECO:0007669"/>
    <property type="project" value="TreeGrafter"/>
</dbReference>
<dbReference type="GO" id="GO:0004807">
    <property type="term" value="F:triose-phosphate isomerase activity"/>
    <property type="evidence" value="ECO:0007669"/>
    <property type="project" value="UniProtKB-UniRule"/>
</dbReference>
<dbReference type="GO" id="GO:0006094">
    <property type="term" value="P:gluconeogenesis"/>
    <property type="evidence" value="ECO:0007669"/>
    <property type="project" value="UniProtKB-UniRule"/>
</dbReference>
<dbReference type="GO" id="GO:0046166">
    <property type="term" value="P:glyceraldehyde-3-phosphate biosynthetic process"/>
    <property type="evidence" value="ECO:0007669"/>
    <property type="project" value="TreeGrafter"/>
</dbReference>
<dbReference type="GO" id="GO:0019563">
    <property type="term" value="P:glycerol catabolic process"/>
    <property type="evidence" value="ECO:0007669"/>
    <property type="project" value="TreeGrafter"/>
</dbReference>
<dbReference type="GO" id="GO:0006096">
    <property type="term" value="P:glycolytic process"/>
    <property type="evidence" value="ECO:0007669"/>
    <property type="project" value="UniProtKB-UniRule"/>
</dbReference>
<dbReference type="CDD" id="cd00311">
    <property type="entry name" value="TIM"/>
    <property type="match status" value="1"/>
</dbReference>
<dbReference type="FunFam" id="3.20.20.70:FF:000020">
    <property type="entry name" value="Triosephosphate isomerase"/>
    <property type="match status" value="1"/>
</dbReference>
<dbReference type="Gene3D" id="3.20.20.70">
    <property type="entry name" value="Aldolase class I"/>
    <property type="match status" value="1"/>
</dbReference>
<dbReference type="HAMAP" id="MF_00147_B">
    <property type="entry name" value="TIM_B"/>
    <property type="match status" value="1"/>
</dbReference>
<dbReference type="InterPro" id="IPR013785">
    <property type="entry name" value="Aldolase_TIM"/>
</dbReference>
<dbReference type="InterPro" id="IPR035990">
    <property type="entry name" value="TIM_sf"/>
</dbReference>
<dbReference type="InterPro" id="IPR022896">
    <property type="entry name" value="TrioseP_Isoase_bac/euk"/>
</dbReference>
<dbReference type="InterPro" id="IPR000652">
    <property type="entry name" value="Triosephosphate_isomerase"/>
</dbReference>
<dbReference type="InterPro" id="IPR020861">
    <property type="entry name" value="Triosephosphate_isomerase_AS"/>
</dbReference>
<dbReference type="NCBIfam" id="TIGR00419">
    <property type="entry name" value="tim"/>
    <property type="match status" value="1"/>
</dbReference>
<dbReference type="PANTHER" id="PTHR21139">
    <property type="entry name" value="TRIOSEPHOSPHATE ISOMERASE"/>
    <property type="match status" value="1"/>
</dbReference>
<dbReference type="PANTHER" id="PTHR21139:SF42">
    <property type="entry name" value="TRIOSEPHOSPHATE ISOMERASE"/>
    <property type="match status" value="1"/>
</dbReference>
<dbReference type="Pfam" id="PF00121">
    <property type="entry name" value="TIM"/>
    <property type="match status" value="1"/>
</dbReference>
<dbReference type="SUPFAM" id="SSF51351">
    <property type="entry name" value="Triosephosphate isomerase (TIM)"/>
    <property type="match status" value="1"/>
</dbReference>
<dbReference type="PROSITE" id="PS00171">
    <property type="entry name" value="TIM_1"/>
    <property type="match status" value="1"/>
</dbReference>
<dbReference type="PROSITE" id="PS51440">
    <property type="entry name" value="TIM_2"/>
    <property type="match status" value="1"/>
</dbReference>
<organism>
    <name type="scientific">Haemophilus influenzae (strain 86-028NP)</name>
    <dbReference type="NCBI Taxonomy" id="281310"/>
    <lineage>
        <taxon>Bacteria</taxon>
        <taxon>Pseudomonadati</taxon>
        <taxon>Pseudomonadota</taxon>
        <taxon>Gammaproteobacteria</taxon>
        <taxon>Pasteurellales</taxon>
        <taxon>Pasteurellaceae</taxon>
        <taxon>Haemophilus</taxon>
    </lineage>
</organism>
<reference key="1">
    <citation type="journal article" date="2005" name="J. Bacteriol.">
        <title>Genomic sequence of an otitis media isolate of nontypeable Haemophilus influenzae: comparative study with H. influenzae serotype d, strain KW20.</title>
        <authorList>
            <person name="Harrison A."/>
            <person name="Dyer D.W."/>
            <person name="Gillaspy A."/>
            <person name="Ray W.C."/>
            <person name="Mungur R."/>
            <person name="Carson M.B."/>
            <person name="Zhong H."/>
            <person name="Gipson J."/>
            <person name="Gipson M."/>
            <person name="Johnson L.S."/>
            <person name="Lewis L."/>
            <person name="Bakaletz L.O."/>
            <person name="Munson R.S. Jr."/>
        </authorList>
    </citation>
    <scope>NUCLEOTIDE SEQUENCE [LARGE SCALE GENOMIC DNA]</scope>
    <source>
        <strain>86-028NP</strain>
    </source>
</reference>
<feature type="chain" id="PRO_0000307473" description="Triosephosphate isomerase">
    <location>
        <begin position="1"/>
        <end position="263"/>
    </location>
</feature>
<feature type="active site" description="Electrophile" evidence="1">
    <location>
        <position position="104"/>
    </location>
</feature>
<feature type="active site" description="Proton acceptor" evidence="1">
    <location>
        <position position="176"/>
    </location>
</feature>
<feature type="binding site" evidence="1">
    <location>
        <begin position="10"/>
        <end position="12"/>
    </location>
    <ligand>
        <name>substrate</name>
    </ligand>
</feature>
<feature type="binding site" evidence="1">
    <location>
        <position position="182"/>
    </location>
    <ligand>
        <name>substrate</name>
    </ligand>
</feature>
<feature type="binding site" evidence="1">
    <location>
        <position position="221"/>
    </location>
    <ligand>
        <name>substrate</name>
    </ligand>
</feature>
<feature type="binding site" evidence="1">
    <location>
        <begin position="242"/>
        <end position="243"/>
    </location>
    <ligand>
        <name>substrate</name>
    </ligand>
</feature>
<proteinExistence type="inferred from homology"/>
<sequence length="263" mass="27273">MARRPLVMGNWKLNGSKAFTKELIEGLKAELHDVTGCDVAIAPPVMYLGTAEAALSGCGCSCGGKSVIQLGAQNVDINVKGAFTGDISSEMLKDFGAKYIIIGHSERRTYHKESDEFVAKKFGALKEAGLVPVLCIGESEAENEAGKTEEVCARQIDAVINALGVEAFNGAVIAYEPIWAIGTGKSATPAQAQAVHAFIRGHIAAKSQAVAEQVIIQYGGSVNDANAAELFTQPDIDGALVGGASLKAPAFAVIVKAAAAAKN</sequence>
<keyword id="KW-0963">Cytoplasm</keyword>
<keyword id="KW-0312">Gluconeogenesis</keyword>
<keyword id="KW-0324">Glycolysis</keyword>
<keyword id="KW-0413">Isomerase</keyword>
<accession>Q4QMN8</accession>
<protein>
    <recommendedName>
        <fullName evidence="1">Triosephosphate isomerase</fullName>
        <shortName evidence="1">TIM</shortName>
        <shortName evidence="1">TPI</shortName>
        <ecNumber evidence="1">5.3.1.1</ecNumber>
    </recommendedName>
    <alternativeName>
        <fullName evidence="1">Triose-phosphate isomerase</fullName>
    </alternativeName>
</protein>
<gene>
    <name evidence="1" type="primary">tpiA</name>
    <name type="ordered locus">NTHI0800</name>
</gene>
<evidence type="ECO:0000255" key="1">
    <source>
        <dbReference type="HAMAP-Rule" id="MF_00147"/>
    </source>
</evidence>